<gene>
    <name type="ORF">OsI_03084</name>
</gene>
<name>PLA2_ORYSI</name>
<feature type="chain" id="PRO_0000409365" description="Phospholipase A1-II 2">
    <location>
        <begin position="1"/>
        <end position="403"/>
    </location>
</feature>
<feature type="region of interest" description="Disordered" evidence="3">
    <location>
        <begin position="381"/>
        <end position="403"/>
    </location>
</feature>
<feature type="compositionally biased region" description="Acidic residues" evidence="3">
    <location>
        <begin position="392"/>
        <end position="403"/>
    </location>
</feature>
<feature type="active site" description="Acyl-ester intermediate" evidence="1">
    <location>
        <position position="218"/>
    </location>
</feature>
<feature type="active site" description="Charge relay system" evidence="2">
    <location>
        <position position="218"/>
    </location>
</feature>
<feature type="active site" description="Charge relay system" evidence="2">
    <location>
        <position position="286"/>
    </location>
</feature>
<feature type="active site" description="Charge relay system" evidence="2">
    <location>
        <position position="323"/>
    </location>
</feature>
<keyword id="KW-0963">Cytoplasm</keyword>
<keyword id="KW-0378">Hydrolase</keyword>
<keyword id="KW-0442">Lipid degradation</keyword>
<keyword id="KW-0443">Lipid metabolism</keyword>
<keyword id="KW-1185">Reference proteome</keyword>
<sequence>MASRWRELHGSGHWDGLLDPLDVDLRRCLITYGEMIMATYEAFIGEHRSPNAGMCRYRRADLFRRVDVSHPGWYAATRYIYATANADVHGKVLLRPLCREGRATECNWMGYVAVATDEGAAALGRRDIVVAWRGTQRALEWVADLKLAPASAAGILGPEGADGTDPSVHRGYLSLYTSEDQCSELNKQSARMQVLTEIARLMDKYKDEETSITVIGHSLGATLATLNAADIAANSYNTSSLSPSGETRAPVTAVVFGSPRTGDRGFRDAFHRLRDLRMLRVRNRPDRIPHYPPVGYADVGVELLIDTRLSPFLRRHGSESQSHDLECHLHGVAGWHGDHRGFELVVDRDVALVNKFDDCLADEYPVPVRWKVHHNKSMVKGPDGRWVLQDHEPDDDDDDDDDD</sequence>
<reference key="1">
    <citation type="journal article" date="2005" name="PLoS Biol.">
        <title>The genomes of Oryza sativa: a history of duplications.</title>
        <authorList>
            <person name="Yu J."/>
            <person name="Wang J."/>
            <person name="Lin W."/>
            <person name="Li S."/>
            <person name="Li H."/>
            <person name="Zhou J."/>
            <person name="Ni P."/>
            <person name="Dong W."/>
            <person name="Hu S."/>
            <person name="Zeng C."/>
            <person name="Zhang J."/>
            <person name="Zhang Y."/>
            <person name="Li R."/>
            <person name="Xu Z."/>
            <person name="Li S."/>
            <person name="Li X."/>
            <person name="Zheng H."/>
            <person name="Cong L."/>
            <person name="Lin L."/>
            <person name="Yin J."/>
            <person name="Geng J."/>
            <person name="Li G."/>
            <person name="Shi J."/>
            <person name="Liu J."/>
            <person name="Lv H."/>
            <person name="Li J."/>
            <person name="Wang J."/>
            <person name="Deng Y."/>
            <person name="Ran L."/>
            <person name="Shi X."/>
            <person name="Wang X."/>
            <person name="Wu Q."/>
            <person name="Li C."/>
            <person name="Ren X."/>
            <person name="Wang J."/>
            <person name="Wang X."/>
            <person name="Li D."/>
            <person name="Liu D."/>
            <person name="Zhang X."/>
            <person name="Ji Z."/>
            <person name="Zhao W."/>
            <person name="Sun Y."/>
            <person name="Zhang Z."/>
            <person name="Bao J."/>
            <person name="Han Y."/>
            <person name="Dong L."/>
            <person name="Ji J."/>
            <person name="Chen P."/>
            <person name="Wu S."/>
            <person name="Liu J."/>
            <person name="Xiao Y."/>
            <person name="Bu D."/>
            <person name="Tan J."/>
            <person name="Yang L."/>
            <person name="Ye C."/>
            <person name="Zhang J."/>
            <person name="Xu J."/>
            <person name="Zhou Y."/>
            <person name="Yu Y."/>
            <person name="Zhang B."/>
            <person name="Zhuang S."/>
            <person name="Wei H."/>
            <person name="Liu B."/>
            <person name="Lei M."/>
            <person name="Yu H."/>
            <person name="Li Y."/>
            <person name="Xu H."/>
            <person name="Wei S."/>
            <person name="He X."/>
            <person name="Fang L."/>
            <person name="Zhang Z."/>
            <person name="Zhang Y."/>
            <person name="Huang X."/>
            <person name="Su Z."/>
            <person name="Tong W."/>
            <person name="Li J."/>
            <person name="Tong Z."/>
            <person name="Li S."/>
            <person name="Ye J."/>
            <person name="Wang L."/>
            <person name="Fang L."/>
            <person name="Lei T."/>
            <person name="Chen C.-S."/>
            <person name="Chen H.-C."/>
            <person name="Xu Z."/>
            <person name="Li H."/>
            <person name="Huang H."/>
            <person name="Zhang F."/>
            <person name="Xu H."/>
            <person name="Li N."/>
            <person name="Zhao C."/>
            <person name="Li S."/>
            <person name="Dong L."/>
            <person name="Huang Y."/>
            <person name="Li L."/>
            <person name="Xi Y."/>
            <person name="Qi Q."/>
            <person name="Li W."/>
            <person name="Zhang B."/>
            <person name="Hu W."/>
            <person name="Zhang Y."/>
            <person name="Tian X."/>
            <person name="Jiao Y."/>
            <person name="Liang X."/>
            <person name="Jin J."/>
            <person name="Gao L."/>
            <person name="Zheng W."/>
            <person name="Hao B."/>
            <person name="Liu S.-M."/>
            <person name="Wang W."/>
            <person name="Yuan L."/>
            <person name="Cao M."/>
            <person name="McDermott J."/>
            <person name="Samudrala R."/>
            <person name="Wang J."/>
            <person name="Wong G.K.-S."/>
            <person name="Yang H."/>
        </authorList>
    </citation>
    <scope>NUCLEOTIDE SEQUENCE [LARGE SCALE GENOMIC DNA]</scope>
    <source>
        <strain>cv. 93-11</strain>
    </source>
</reference>
<proteinExistence type="inferred from homology"/>
<organism>
    <name type="scientific">Oryza sativa subsp. indica</name>
    <name type="common">Rice</name>
    <dbReference type="NCBI Taxonomy" id="39946"/>
    <lineage>
        <taxon>Eukaryota</taxon>
        <taxon>Viridiplantae</taxon>
        <taxon>Streptophyta</taxon>
        <taxon>Embryophyta</taxon>
        <taxon>Tracheophyta</taxon>
        <taxon>Spermatophyta</taxon>
        <taxon>Magnoliopsida</taxon>
        <taxon>Liliopsida</taxon>
        <taxon>Poales</taxon>
        <taxon>Poaceae</taxon>
        <taxon>BOP clade</taxon>
        <taxon>Oryzoideae</taxon>
        <taxon>Oryzeae</taxon>
        <taxon>Oryzinae</taxon>
        <taxon>Oryza</taxon>
        <taxon>Oryza sativa</taxon>
    </lineage>
</organism>
<evidence type="ECO:0000250" key="1"/>
<evidence type="ECO:0000255" key="2">
    <source>
        <dbReference type="PROSITE-ProRule" id="PRU10037"/>
    </source>
</evidence>
<evidence type="ECO:0000256" key="3">
    <source>
        <dbReference type="SAM" id="MobiDB-lite"/>
    </source>
</evidence>
<evidence type="ECO:0000305" key="4"/>
<protein>
    <recommendedName>
        <fullName>Phospholipase A1-II 2</fullName>
        <ecNumber>3.1.1.-</ecNumber>
    </recommendedName>
</protein>
<comment type="function">
    <text evidence="1">Acylhydrolase that catalyzes the hydrolysis of phospholipids at the sn-1 position.</text>
</comment>
<comment type="subcellular location">
    <subcellularLocation>
        <location evidence="1">Cytoplasm</location>
    </subcellularLocation>
</comment>
<comment type="similarity">
    <text evidence="4">Belongs to the AB hydrolase superfamily. Lipase family.</text>
</comment>
<comment type="sequence caution" evidence="4">
    <conflict type="erroneous gene model prediction">
        <sequence resource="EMBL-CDS" id="EAY75192"/>
    </conflict>
</comment>
<dbReference type="EC" id="3.1.1.-"/>
<dbReference type="EMBL" id="CM000126">
    <property type="protein sequence ID" value="EAY75192.1"/>
    <property type="status" value="ALT_SEQ"/>
    <property type="molecule type" value="Genomic_DNA"/>
</dbReference>
<dbReference type="SMR" id="A2WT96"/>
<dbReference type="ESTHER" id="orysa-Q5VP27">
    <property type="family name" value="Plant_phospholipase"/>
</dbReference>
<dbReference type="HOGENOM" id="CLU_018841_0_0_1"/>
<dbReference type="Proteomes" id="UP000007015">
    <property type="component" value="Chromosome 1"/>
</dbReference>
<dbReference type="GO" id="GO:0005737">
    <property type="term" value="C:cytoplasm"/>
    <property type="evidence" value="ECO:0000250"/>
    <property type="project" value="UniProtKB"/>
</dbReference>
<dbReference type="GO" id="GO:0008970">
    <property type="term" value="F:phospholipase A1 activity"/>
    <property type="evidence" value="ECO:0000250"/>
    <property type="project" value="UniProtKB"/>
</dbReference>
<dbReference type="GO" id="GO:0016042">
    <property type="term" value="P:lipid catabolic process"/>
    <property type="evidence" value="ECO:0007669"/>
    <property type="project" value="UniProtKB-KW"/>
</dbReference>
<dbReference type="CDD" id="cd00519">
    <property type="entry name" value="Lipase_3"/>
    <property type="match status" value="1"/>
</dbReference>
<dbReference type="FunFam" id="3.40.50.1820:FF:000065">
    <property type="entry name" value="Phospholipase A1-II 3"/>
    <property type="match status" value="1"/>
</dbReference>
<dbReference type="Gene3D" id="3.40.50.1820">
    <property type="entry name" value="alpha/beta hydrolase"/>
    <property type="match status" value="1"/>
</dbReference>
<dbReference type="InterPro" id="IPR029058">
    <property type="entry name" value="AB_hydrolase_fold"/>
</dbReference>
<dbReference type="InterPro" id="IPR002921">
    <property type="entry name" value="Fungal_lipase-type"/>
</dbReference>
<dbReference type="InterPro" id="IPR033556">
    <property type="entry name" value="PLA"/>
</dbReference>
<dbReference type="PANTHER" id="PTHR31828:SF5">
    <property type="entry name" value="PHOSPHOLIPASE A1-II 2"/>
    <property type="match status" value="1"/>
</dbReference>
<dbReference type="PANTHER" id="PTHR31828">
    <property type="entry name" value="PHOSPHOLIPASE A1-IIGAMMA"/>
    <property type="match status" value="1"/>
</dbReference>
<dbReference type="Pfam" id="PF01764">
    <property type="entry name" value="Lipase_3"/>
    <property type="match status" value="1"/>
</dbReference>
<dbReference type="SUPFAM" id="SSF53474">
    <property type="entry name" value="alpha/beta-Hydrolases"/>
    <property type="match status" value="1"/>
</dbReference>
<dbReference type="PROSITE" id="PS00120">
    <property type="entry name" value="LIPASE_SER"/>
    <property type="match status" value="1"/>
</dbReference>
<accession>A2WT96</accession>